<evidence type="ECO:0000250" key="1"/>
<evidence type="ECO:0000255" key="2"/>
<evidence type="ECO:0000255" key="3">
    <source>
        <dbReference type="PROSITE-ProRule" id="PRU00145"/>
    </source>
</evidence>
<evidence type="ECO:0000255" key="4">
    <source>
        <dbReference type="PROSITE-ProRule" id="PRU00172"/>
    </source>
</evidence>
<evidence type="ECO:0000256" key="5">
    <source>
        <dbReference type="SAM" id="MobiDB-lite"/>
    </source>
</evidence>
<evidence type="ECO:0000303" key="6">
    <source>
    </source>
</evidence>
<evidence type="ECO:0000303" key="7">
    <source>
    </source>
</evidence>
<evidence type="ECO:0000305" key="8"/>
<evidence type="ECO:0007744" key="9">
    <source>
    </source>
</evidence>
<evidence type="ECO:0007744" key="10">
    <source>
    </source>
</evidence>
<accession>Q8BYW1</accession>
<accession>B2RS69</accession>
<accession>Q2VPR2</accession>
<accession>Q3TE04</accession>
<accession>Q3TVX0</accession>
<accession>Q3UVB7</accession>
<accession>Q6A0E0</accession>
<accession>Q8BX98</accession>
<gene>
    <name type="primary">Arhgap25</name>
    <name type="synonym">Kiaa0053</name>
</gene>
<keyword id="KW-0025">Alternative splicing</keyword>
<keyword id="KW-0175">Coiled coil</keyword>
<keyword id="KW-0343">GTPase activation</keyword>
<keyword id="KW-0597">Phosphoprotein</keyword>
<keyword id="KW-1185">Reference proteome</keyword>
<proteinExistence type="evidence at protein level"/>
<name>RHG25_MOUSE</name>
<dbReference type="EMBL" id="AK037710">
    <property type="protein sequence ID" value="BAC29857.1"/>
    <property type="status" value="ALT_INIT"/>
    <property type="molecule type" value="mRNA"/>
</dbReference>
<dbReference type="EMBL" id="AK137444">
    <property type="protein sequence ID" value="BAE23353.1"/>
    <property type="molecule type" value="mRNA"/>
</dbReference>
<dbReference type="EMBL" id="AK159941">
    <property type="protein sequence ID" value="BAE35498.1"/>
    <property type="molecule type" value="mRNA"/>
</dbReference>
<dbReference type="EMBL" id="AK159598">
    <property type="protein sequence ID" value="BAE35218.1"/>
    <property type="molecule type" value="mRNA"/>
</dbReference>
<dbReference type="EMBL" id="AK169897">
    <property type="protein sequence ID" value="BAE41444.1"/>
    <property type="molecule type" value="mRNA"/>
</dbReference>
<dbReference type="EMBL" id="BC108400">
    <property type="protein sequence ID" value="AAI08401.1"/>
    <property type="molecule type" value="mRNA"/>
</dbReference>
<dbReference type="EMBL" id="BC138751">
    <property type="protein sequence ID" value="AAI38752.1"/>
    <property type="molecule type" value="mRNA"/>
</dbReference>
<dbReference type="EMBL" id="AK172878">
    <property type="protein sequence ID" value="BAD32156.1"/>
    <property type="molecule type" value="mRNA"/>
</dbReference>
<dbReference type="CCDS" id="CCDS20321.1">
    <molecule id="Q8BYW1-1"/>
</dbReference>
<dbReference type="CCDS" id="CCDS20322.1">
    <molecule id="Q8BYW1-3"/>
</dbReference>
<dbReference type="CCDS" id="CCDS71790.1">
    <molecule id="Q8BYW1-2"/>
</dbReference>
<dbReference type="RefSeq" id="NP_001032816.1">
    <molecule id="Q8BYW1-1"/>
    <property type="nucleotide sequence ID" value="NM_001037727.2"/>
</dbReference>
<dbReference type="RefSeq" id="NP_001273539.1">
    <molecule id="Q8BYW1-2"/>
    <property type="nucleotide sequence ID" value="NM_001286610.1"/>
</dbReference>
<dbReference type="RefSeq" id="NP_780685.2">
    <molecule id="Q8BYW1-3"/>
    <property type="nucleotide sequence ID" value="NM_175476.4"/>
</dbReference>
<dbReference type="SMR" id="Q8BYW1"/>
<dbReference type="BioGRID" id="231227">
    <property type="interactions" value="3"/>
</dbReference>
<dbReference type="FunCoup" id="Q8BYW1">
    <property type="interactions" value="317"/>
</dbReference>
<dbReference type="STRING" id="10090.ENSMUSP00000109267"/>
<dbReference type="iPTMnet" id="Q8BYW1"/>
<dbReference type="PhosphoSitePlus" id="Q8BYW1"/>
<dbReference type="jPOST" id="Q8BYW1"/>
<dbReference type="PaxDb" id="10090-ENSMUSP00000109267"/>
<dbReference type="ProteomicsDB" id="255206">
    <molecule id="Q8BYW1-1"/>
</dbReference>
<dbReference type="ProteomicsDB" id="255207">
    <molecule id="Q8BYW1-2"/>
</dbReference>
<dbReference type="ProteomicsDB" id="255208">
    <molecule id="Q8BYW1-3"/>
</dbReference>
<dbReference type="Antibodypedia" id="30948">
    <property type="antibodies" value="434 antibodies from 28 providers"/>
</dbReference>
<dbReference type="DNASU" id="232201"/>
<dbReference type="Ensembl" id="ENSMUST00000071024.7">
    <molecule id="Q8BYW1-2"/>
    <property type="protein sequence ID" value="ENSMUSP00000068964.7"/>
    <property type="gene ID" value="ENSMUSG00000030047.15"/>
</dbReference>
<dbReference type="Ensembl" id="ENSMUST00000101197.9">
    <molecule id="Q8BYW1-3"/>
    <property type="protein sequence ID" value="ENSMUSP00000098758.3"/>
    <property type="gene ID" value="ENSMUSG00000030047.15"/>
</dbReference>
<dbReference type="Ensembl" id="ENSMUST00000113637.9">
    <molecule id="Q8BYW1-1"/>
    <property type="protein sequence ID" value="ENSMUSP00000109267.3"/>
    <property type="gene ID" value="ENSMUSG00000030047.15"/>
</dbReference>
<dbReference type="GeneID" id="232201"/>
<dbReference type="KEGG" id="mmu:232201"/>
<dbReference type="UCSC" id="uc009ctl.2">
    <molecule id="Q8BYW1-1"/>
    <property type="organism name" value="mouse"/>
</dbReference>
<dbReference type="AGR" id="MGI:2443687"/>
<dbReference type="CTD" id="9938"/>
<dbReference type="MGI" id="MGI:2443687">
    <property type="gene designation" value="Arhgap25"/>
</dbReference>
<dbReference type="VEuPathDB" id="HostDB:ENSMUSG00000030047"/>
<dbReference type="eggNOG" id="KOG4270">
    <property type="taxonomic scope" value="Eukaryota"/>
</dbReference>
<dbReference type="GeneTree" id="ENSGT00950000183015"/>
<dbReference type="HOGENOM" id="CLU_020795_1_0_1"/>
<dbReference type="InParanoid" id="Q8BYW1"/>
<dbReference type="OMA" id="HRASTYD"/>
<dbReference type="OrthoDB" id="185175at2759"/>
<dbReference type="PhylomeDB" id="Q8BYW1"/>
<dbReference type="TreeFam" id="TF323577"/>
<dbReference type="Reactome" id="R-MMU-9013149">
    <property type="pathway name" value="RAC1 GTPase cycle"/>
</dbReference>
<dbReference type="BioGRID-ORCS" id="232201">
    <property type="hits" value="1 hit in 77 CRISPR screens"/>
</dbReference>
<dbReference type="ChiTaRS" id="Arhgap25">
    <property type="organism name" value="mouse"/>
</dbReference>
<dbReference type="PRO" id="PR:Q8BYW1"/>
<dbReference type="Proteomes" id="UP000000589">
    <property type="component" value="Chromosome 6"/>
</dbReference>
<dbReference type="RNAct" id="Q8BYW1">
    <property type="molecule type" value="protein"/>
</dbReference>
<dbReference type="Bgee" id="ENSMUSG00000030047">
    <property type="expression patterns" value="Expressed in granulocyte and 125 other cell types or tissues"/>
</dbReference>
<dbReference type="GO" id="GO:0001891">
    <property type="term" value="C:phagocytic cup"/>
    <property type="evidence" value="ECO:0000250"/>
    <property type="project" value="UniProtKB"/>
</dbReference>
<dbReference type="GO" id="GO:0005096">
    <property type="term" value="F:GTPase activator activity"/>
    <property type="evidence" value="ECO:0007669"/>
    <property type="project" value="UniProtKB-KW"/>
</dbReference>
<dbReference type="GO" id="GO:0007015">
    <property type="term" value="P:actin filament organization"/>
    <property type="evidence" value="ECO:0000250"/>
    <property type="project" value="UniProtKB"/>
</dbReference>
<dbReference type="GO" id="GO:0051058">
    <property type="term" value="P:negative regulation of small GTPase mediated signal transduction"/>
    <property type="evidence" value="ECO:0000250"/>
    <property type="project" value="UniProtKB"/>
</dbReference>
<dbReference type="GO" id="GO:0006911">
    <property type="term" value="P:phagocytosis, engulfment"/>
    <property type="evidence" value="ECO:0000250"/>
    <property type="project" value="UniProtKB"/>
</dbReference>
<dbReference type="GO" id="GO:0007165">
    <property type="term" value="P:signal transduction"/>
    <property type="evidence" value="ECO:0007669"/>
    <property type="project" value="InterPro"/>
</dbReference>
<dbReference type="CDD" id="cd13263">
    <property type="entry name" value="PH_RhoGap25-like"/>
    <property type="match status" value="1"/>
</dbReference>
<dbReference type="CDD" id="cd04390">
    <property type="entry name" value="RhoGAP_ARHGAP22_24_25"/>
    <property type="match status" value="1"/>
</dbReference>
<dbReference type="FunFam" id="2.30.29.30:FF:000120">
    <property type="entry name" value="rho GTPase-activating protein 22 isoform X1"/>
    <property type="match status" value="1"/>
</dbReference>
<dbReference type="FunFam" id="1.10.555.10:FF:000015">
    <property type="entry name" value="rho GTPase-activating protein 25 isoform X1"/>
    <property type="match status" value="1"/>
</dbReference>
<dbReference type="Gene3D" id="2.30.29.30">
    <property type="entry name" value="Pleckstrin-homology domain (PH domain)/Phosphotyrosine-binding domain (PTB)"/>
    <property type="match status" value="1"/>
</dbReference>
<dbReference type="Gene3D" id="1.10.555.10">
    <property type="entry name" value="Rho GTPase activation protein"/>
    <property type="match status" value="1"/>
</dbReference>
<dbReference type="InterPro" id="IPR011993">
    <property type="entry name" value="PH-like_dom_sf"/>
</dbReference>
<dbReference type="InterPro" id="IPR001849">
    <property type="entry name" value="PH_domain"/>
</dbReference>
<dbReference type="InterPro" id="IPR008936">
    <property type="entry name" value="Rho_GTPase_activation_prot"/>
</dbReference>
<dbReference type="InterPro" id="IPR051025">
    <property type="entry name" value="RhoGAP"/>
</dbReference>
<dbReference type="InterPro" id="IPR000198">
    <property type="entry name" value="RhoGAP_dom"/>
</dbReference>
<dbReference type="PANTHER" id="PTHR15228:SF20">
    <property type="entry name" value="RHO GTPASE-ACTIVATING PROTEIN 25"/>
    <property type="match status" value="1"/>
</dbReference>
<dbReference type="PANTHER" id="PTHR15228">
    <property type="entry name" value="SPERMATHECAL PHYSIOLOGY VARIANT"/>
    <property type="match status" value="1"/>
</dbReference>
<dbReference type="Pfam" id="PF00169">
    <property type="entry name" value="PH"/>
    <property type="match status" value="1"/>
</dbReference>
<dbReference type="Pfam" id="PF00620">
    <property type="entry name" value="RhoGAP"/>
    <property type="match status" value="1"/>
</dbReference>
<dbReference type="SMART" id="SM00233">
    <property type="entry name" value="PH"/>
    <property type="match status" value="1"/>
</dbReference>
<dbReference type="SMART" id="SM00324">
    <property type="entry name" value="RhoGAP"/>
    <property type="match status" value="1"/>
</dbReference>
<dbReference type="SUPFAM" id="SSF48350">
    <property type="entry name" value="GTPase activation domain, GAP"/>
    <property type="match status" value="1"/>
</dbReference>
<dbReference type="SUPFAM" id="SSF50729">
    <property type="entry name" value="PH domain-like"/>
    <property type="match status" value="1"/>
</dbReference>
<dbReference type="PROSITE" id="PS50003">
    <property type="entry name" value="PH_DOMAIN"/>
    <property type="match status" value="1"/>
</dbReference>
<dbReference type="PROSITE" id="PS50238">
    <property type="entry name" value="RHOGAP"/>
    <property type="match status" value="1"/>
</dbReference>
<comment type="function">
    <text evidence="1">GTPase activator for the Rho-type GTPases by converting them to an inactive GDP-bound state.</text>
</comment>
<comment type="alternative products">
    <event type="alternative splicing"/>
    <isoform>
        <id>Q8BYW1-1</id>
        <name>1</name>
        <sequence type="displayed"/>
    </isoform>
    <isoform>
        <id>Q8BYW1-2</id>
        <name>2</name>
        <sequence type="described" ref="VSP_019233"/>
    </isoform>
    <isoform>
        <id>Q8BYW1-3</id>
        <name>3</name>
        <sequence type="described" ref="VSP_019234"/>
    </isoform>
</comment>
<comment type="sequence caution" evidence="8">
    <conflict type="erroneous initiation">
        <sequence resource="EMBL-CDS" id="BAC29857"/>
    </conflict>
</comment>
<sequence length="648" mass="73383">MSLKLPRNWDFNLKAEASKIARSRSVMTGEQMAAFHPPTTPNPLERPIKVGWLKKQRSIVKNWQQRYFVLRAQQLYYYKDEEDSKPQGCMYLPGSTVKEIATNPEEAGKFVFEVIPASSDQNRIGQDSYVLMASSQVEMEEWVKFLRRVAGTPSGAVFGQRLDETVAYEQKFGPHLVPILVEKCAEFILEHGVSEEGIFRLPGQDNLVKQLRDAFDAGERPSFDRDTDVHTVASLLKLYLRDLPEPVVPWSQYEGFLLCGQLMNADEAKAQQELVKQLSTLPRDNYNLLSYICRFLHEIQLNCAVNKMSVDNLATVIGVNLIRSKVEDPAVIMRGTPQIQRVMTMMIRDHEVLFPKSKDAPISPPAQKNDAKKAPVPRSSVGWDATEDPPLSRTDSFSNTASSPDATSPTGPLPSDQHQEDSGKAPRENPGDWKMQSRKRTQTLPNRKCFLTSAFQGTTSSKLEIFKNEFWSPSSEAKAGEGHRRTMSQDLRHLSNDQRTSTYDNVPTSPQSQGNPAGALSPPASDSKRDALVSTDSEMEAGSKNSGEDDLDSLQRTVQSLQKEIETQKQVYEEQIKNLEKENYDVWAKVVRLNEELERERKKFAALEISLRNVERSREDVEKRNRVLEEEVKEFVKSMEKPKTKTDP</sequence>
<organism>
    <name type="scientific">Mus musculus</name>
    <name type="common">Mouse</name>
    <dbReference type="NCBI Taxonomy" id="10090"/>
    <lineage>
        <taxon>Eukaryota</taxon>
        <taxon>Metazoa</taxon>
        <taxon>Chordata</taxon>
        <taxon>Craniata</taxon>
        <taxon>Vertebrata</taxon>
        <taxon>Euteleostomi</taxon>
        <taxon>Mammalia</taxon>
        <taxon>Eutheria</taxon>
        <taxon>Euarchontoglires</taxon>
        <taxon>Glires</taxon>
        <taxon>Rodentia</taxon>
        <taxon>Myomorpha</taxon>
        <taxon>Muroidea</taxon>
        <taxon>Muridae</taxon>
        <taxon>Murinae</taxon>
        <taxon>Mus</taxon>
        <taxon>Mus</taxon>
    </lineage>
</organism>
<feature type="chain" id="PRO_0000056717" description="Rho GTPase-activating protein 25">
    <location>
        <begin position="1"/>
        <end position="648"/>
    </location>
</feature>
<feature type="domain" description="PH" evidence="3">
    <location>
        <begin position="46"/>
        <end position="151"/>
    </location>
</feature>
<feature type="domain" description="Rho-GAP" evidence="4">
    <location>
        <begin position="160"/>
        <end position="354"/>
    </location>
</feature>
<feature type="region of interest" description="Disordered" evidence="5">
    <location>
        <begin position="356"/>
        <end position="559"/>
    </location>
</feature>
<feature type="coiled-coil region" evidence="2">
    <location>
        <begin position="540"/>
        <end position="641"/>
    </location>
</feature>
<feature type="compositionally biased region" description="Polar residues" evidence="5">
    <location>
        <begin position="393"/>
        <end position="410"/>
    </location>
</feature>
<feature type="compositionally biased region" description="Basic and acidic residues" evidence="5">
    <location>
        <begin position="417"/>
        <end position="431"/>
    </location>
</feature>
<feature type="compositionally biased region" description="Polar residues" evidence="5">
    <location>
        <begin position="453"/>
        <end position="462"/>
    </location>
</feature>
<feature type="compositionally biased region" description="Polar residues" evidence="5">
    <location>
        <begin position="497"/>
        <end position="515"/>
    </location>
</feature>
<feature type="site" description="Arginine finger; crucial for GTP hydrolysis by stabilizing the transition state" evidence="4">
    <location>
        <position position="200"/>
    </location>
</feature>
<feature type="modified residue" description="Phosphoserine" evidence="9">
    <location>
        <position position="363"/>
    </location>
</feature>
<feature type="modified residue" description="Phosphoserine" evidence="10">
    <location>
        <position position="396"/>
    </location>
</feature>
<feature type="modified residue" description="Phosphoserine" evidence="10">
    <location>
        <position position="403"/>
    </location>
</feature>
<feature type="modified residue" description="Phosphothreonine" evidence="9">
    <location>
        <position position="407"/>
    </location>
</feature>
<feature type="modified residue" description="Phosphoserine" evidence="10">
    <location>
        <position position="537"/>
    </location>
</feature>
<feature type="splice variant" id="VSP_019233" description="In isoform 2." evidence="7">
    <location>
        <begin position="1"/>
        <end position="89"/>
    </location>
</feature>
<feature type="splice variant" id="VSP_019234" description="In isoform 3." evidence="6 7">
    <location>
        <begin position="1"/>
        <end position="26"/>
    </location>
</feature>
<feature type="sequence conflict" description="In Ref. 2; AAI08401." evidence="8" ref="2">
    <original>K</original>
    <variation>N</variation>
    <location>
        <position position="144"/>
    </location>
</feature>
<feature type="sequence conflict" description="In Ref. 1; BAE41444." evidence="8" ref="1">
    <original>M</original>
    <variation>T</variation>
    <location>
        <position position="333"/>
    </location>
</feature>
<protein>
    <recommendedName>
        <fullName>Rho GTPase-activating protein 25</fullName>
    </recommendedName>
    <alternativeName>
        <fullName>Rho-type GTPase-activating protein 25</fullName>
    </alternativeName>
</protein>
<reference key="1">
    <citation type="journal article" date="2005" name="Science">
        <title>The transcriptional landscape of the mammalian genome.</title>
        <authorList>
            <person name="Carninci P."/>
            <person name="Kasukawa T."/>
            <person name="Katayama S."/>
            <person name="Gough J."/>
            <person name="Frith M.C."/>
            <person name="Maeda N."/>
            <person name="Oyama R."/>
            <person name="Ravasi T."/>
            <person name="Lenhard B."/>
            <person name="Wells C."/>
            <person name="Kodzius R."/>
            <person name="Shimokawa K."/>
            <person name="Bajic V.B."/>
            <person name="Brenner S.E."/>
            <person name="Batalov S."/>
            <person name="Forrest A.R."/>
            <person name="Zavolan M."/>
            <person name="Davis M.J."/>
            <person name="Wilming L.G."/>
            <person name="Aidinis V."/>
            <person name="Allen J.E."/>
            <person name="Ambesi-Impiombato A."/>
            <person name="Apweiler R."/>
            <person name="Aturaliya R.N."/>
            <person name="Bailey T.L."/>
            <person name="Bansal M."/>
            <person name="Baxter L."/>
            <person name="Beisel K.W."/>
            <person name="Bersano T."/>
            <person name="Bono H."/>
            <person name="Chalk A.M."/>
            <person name="Chiu K.P."/>
            <person name="Choudhary V."/>
            <person name="Christoffels A."/>
            <person name="Clutterbuck D.R."/>
            <person name="Crowe M.L."/>
            <person name="Dalla E."/>
            <person name="Dalrymple B.P."/>
            <person name="de Bono B."/>
            <person name="Della Gatta G."/>
            <person name="di Bernardo D."/>
            <person name="Down T."/>
            <person name="Engstrom P."/>
            <person name="Fagiolini M."/>
            <person name="Faulkner G."/>
            <person name="Fletcher C.F."/>
            <person name="Fukushima T."/>
            <person name="Furuno M."/>
            <person name="Futaki S."/>
            <person name="Gariboldi M."/>
            <person name="Georgii-Hemming P."/>
            <person name="Gingeras T.R."/>
            <person name="Gojobori T."/>
            <person name="Green R.E."/>
            <person name="Gustincich S."/>
            <person name="Harbers M."/>
            <person name="Hayashi Y."/>
            <person name="Hensch T.K."/>
            <person name="Hirokawa N."/>
            <person name="Hill D."/>
            <person name="Huminiecki L."/>
            <person name="Iacono M."/>
            <person name="Ikeo K."/>
            <person name="Iwama A."/>
            <person name="Ishikawa T."/>
            <person name="Jakt M."/>
            <person name="Kanapin A."/>
            <person name="Katoh M."/>
            <person name="Kawasawa Y."/>
            <person name="Kelso J."/>
            <person name="Kitamura H."/>
            <person name="Kitano H."/>
            <person name="Kollias G."/>
            <person name="Krishnan S.P."/>
            <person name="Kruger A."/>
            <person name="Kummerfeld S.K."/>
            <person name="Kurochkin I.V."/>
            <person name="Lareau L.F."/>
            <person name="Lazarevic D."/>
            <person name="Lipovich L."/>
            <person name="Liu J."/>
            <person name="Liuni S."/>
            <person name="McWilliam S."/>
            <person name="Madan Babu M."/>
            <person name="Madera M."/>
            <person name="Marchionni L."/>
            <person name="Matsuda H."/>
            <person name="Matsuzawa S."/>
            <person name="Miki H."/>
            <person name="Mignone F."/>
            <person name="Miyake S."/>
            <person name="Morris K."/>
            <person name="Mottagui-Tabar S."/>
            <person name="Mulder N."/>
            <person name="Nakano N."/>
            <person name="Nakauchi H."/>
            <person name="Ng P."/>
            <person name="Nilsson R."/>
            <person name="Nishiguchi S."/>
            <person name="Nishikawa S."/>
            <person name="Nori F."/>
            <person name="Ohara O."/>
            <person name="Okazaki Y."/>
            <person name="Orlando V."/>
            <person name="Pang K.C."/>
            <person name="Pavan W.J."/>
            <person name="Pavesi G."/>
            <person name="Pesole G."/>
            <person name="Petrovsky N."/>
            <person name="Piazza S."/>
            <person name="Reed J."/>
            <person name="Reid J.F."/>
            <person name="Ring B.Z."/>
            <person name="Ringwald M."/>
            <person name="Rost B."/>
            <person name="Ruan Y."/>
            <person name="Salzberg S.L."/>
            <person name="Sandelin A."/>
            <person name="Schneider C."/>
            <person name="Schoenbach C."/>
            <person name="Sekiguchi K."/>
            <person name="Semple C.A."/>
            <person name="Seno S."/>
            <person name="Sessa L."/>
            <person name="Sheng Y."/>
            <person name="Shibata Y."/>
            <person name="Shimada H."/>
            <person name="Shimada K."/>
            <person name="Silva D."/>
            <person name="Sinclair B."/>
            <person name="Sperling S."/>
            <person name="Stupka E."/>
            <person name="Sugiura K."/>
            <person name="Sultana R."/>
            <person name="Takenaka Y."/>
            <person name="Taki K."/>
            <person name="Tammoja K."/>
            <person name="Tan S.L."/>
            <person name="Tang S."/>
            <person name="Taylor M.S."/>
            <person name="Tegner J."/>
            <person name="Teichmann S.A."/>
            <person name="Ueda H.R."/>
            <person name="van Nimwegen E."/>
            <person name="Verardo R."/>
            <person name="Wei C.L."/>
            <person name="Yagi K."/>
            <person name="Yamanishi H."/>
            <person name="Zabarovsky E."/>
            <person name="Zhu S."/>
            <person name="Zimmer A."/>
            <person name="Hide W."/>
            <person name="Bult C."/>
            <person name="Grimmond S.M."/>
            <person name="Teasdale R.D."/>
            <person name="Liu E.T."/>
            <person name="Brusic V."/>
            <person name="Quackenbush J."/>
            <person name="Wahlestedt C."/>
            <person name="Mattick J.S."/>
            <person name="Hume D.A."/>
            <person name="Kai C."/>
            <person name="Sasaki D."/>
            <person name="Tomaru Y."/>
            <person name="Fukuda S."/>
            <person name="Kanamori-Katayama M."/>
            <person name="Suzuki M."/>
            <person name="Aoki J."/>
            <person name="Arakawa T."/>
            <person name="Iida J."/>
            <person name="Imamura K."/>
            <person name="Itoh M."/>
            <person name="Kato T."/>
            <person name="Kawaji H."/>
            <person name="Kawagashira N."/>
            <person name="Kawashima T."/>
            <person name="Kojima M."/>
            <person name="Kondo S."/>
            <person name="Konno H."/>
            <person name="Nakano K."/>
            <person name="Ninomiya N."/>
            <person name="Nishio T."/>
            <person name="Okada M."/>
            <person name="Plessy C."/>
            <person name="Shibata K."/>
            <person name="Shiraki T."/>
            <person name="Suzuki S."/>
            <person name="Tagami M."/>
            <person name="Waki K."/>
            <person name="Watahiki A."/>
            <person name="Okamura-Oho Y."/>
            <person name="Suzuki H."/>
            <person name="Kawai J."/>
            <person name="Hayashizaki Y."/>
        </authorList>
    </citation>
    <scope>NUCLEOTIDE SEQUENCE [LARGE SCALE MRNA] (ISOFORMS 1; 2 AND 3)</scope>
    <source>
        <strain>C57BL/6J</strain>
        <strain>NOD</strain>
        <tissue>Bone</tissue>
        <tissue>Dendritic cell</tissue>
        <tissue>Thymus</tissue>
    </source>
</reference>
<reference key="2">
    <citation type="journal article" date="2004" name="Genome Res.">
        <title>The status, quality, and expansion of the NIH full-length cDNA project: the Mammalian Gene Collection (MGC).</title>
        <authorList>
            <consortium name="The MGC Project Team"/>
        </authorList>
    </citation>
    <scope>NUCLEOTIDE SEQUENCE [LARGE SCALE MRNA] (ISOFORM 3)</scope>
    <scope>NUCLEOTIDE SEQUENCE [LARGE SCALE MRNA] OF 117-648 (ISOFORMS 1/2/3)</scope>
    <source>
        <tissue>Jaw</tissue>
        <tissue>Limb</tissue>
        <tissue>Lung</tissue>
    </source>
</reference>
<reference key="3">
    <citation type="journal article" date="2004" name="DNA Res.">
        <title>Prediction of the coding sequences of mouse homologues of KIAA gene: IV. The complete nucleotide sequences of 500 mouse KIAA-homologous cDNAs identified by screening of terminal sequences of cDNA clones randomly sampled from size-fractionated libraries.</title>
        <authorList>
            <person name="Okazaki N."/>
            <person name="Kikuno R."/>
            <person name="Ohara R."/>
            <person name="Inamoto S."/>
            <person name="Koseki H."/>
            <person name="Hiraoka S."/>
            <person name="Saga Y."/>
            <person name="Seino S."/>
            <person name="Nishimura M."/>
            <person name="Kaisho T."/>
            <person name="Hoshino K."/>
            <person name="Kitamura H."/>
            <person name="Nagase T."/>
            <person name="Ohara O."/>
            <person name="Koga H."/>
        </authorList>
    </citation>
    <scope>NUCLEOTIDE SEQUENCE [LARGE SCALE MRNA] OF 100-648 (ISOFORMS 1/2/3)</scope>
    <source>
        <tissue>Thymus</tissue>
    </source>
</reference>
<reference key="4">
    <citation type="journal article" date="2009" name="Immunity">
        <title>The phagosomal proteome in interferon-gamma-activated macrophages.</title>
        <authorList>
            <person name="Trost M."/>
            <person name="English L."/>
            <person name="Lemieux S."/>
            <person name="Courcelles M."/>
            <person name="Desjardins M."/>
            <person name="Thibault P."/>
        </authorList>
    </citation>
    <scope>PHOSPHORYLATION [LARGE SCALE ANALYSIS] AT SER-363 AND THR-407</scope>
    <scope>IDENTIFICATION BY MASS SPECTROMETRY [LARGE SCALE ANALYSIS]</scope>
</reference>
<reference key="5">
    <citation type="journal article" date="2010" name="Cell">
        <title>A tissue-specific atlas of mouse protein phosphorylation and expression.</title>
        <authorList>
            <person name="Huttlin E.L."/>
            <person name="Jedrychowski M.P."/>
            <person name="Elias J.E."/>
            <person name="Goswami T."/>
            <person name="Rad R."/>
            <person name="Beausoleil S.A."/>
            <person name="Villen J."/>
            <person name="Haas W."/>
            <person name="Sowa M.E."/>
            <person name="Gygi S.P."/>
        </authorList>
    </citation>
    <scope>PHOSPHORYLATION [LARGE SCALE ANALYSIS] AT SER-396; SER-403 AND SER-537</scope>
    <scope>IDENTIFICATION BY MASS SPECTROMETRY [LARGE SCALE ANALYSIS]</scope>
    <source>
        <tissue>Brain</tissue>
        <tissue>Brown adipose tissue</tissue>
        <tissue>Kidney</tissue>
        <tissue>Lung</tissue>
        <tissue>Spleen</tissue>
    </source>
</reference>